<name>COQ2_CAEEL</name>
<reference key="1">
    <citation type="journal article" date="1998" name="Science">
        <title>Genome sequence of the nematode C. elegans: a platform for investigating biology.</title>
        <authorList>
            <consortium name="The C. elegans sequencing consortium"/>
        </authorList>
    </citation>
    <scope>NUCLEOTIDE SEQUENCE [LARGE SCALE GENOMIC DNA]</scope>
    <scope>ALTERNATIVE SPLICING</scope>
    <source>
        <strain>Bristol N2</strain>
    </source>
</reference>
<sequence length="356" mass="38923">MITRSIGIARRSNSINCIVGSNTSTSYSLDESTKRWISTSTKQPMSLIPTASSLVASSPPNLKPYLQLMRVDKPIGTWLLYWPCTWSIAMATPAGQLPSIYMLSLFGAGAFLMRSAGCVINDLWDKDFDKKVERTKLRPLACGSLTEKQAIGLLAGLLSSSLAILLQLNWYSVAVGASSMALVVGYPLAKRFTYWPQFVLGLTFNWGALLGWCALKGDLSSSAPFWMYAAALQWTLIYDTIYAHQDKADDIMIGVKSTALRLGADTKKWLSAFGVGTVASLTACGIASDQTWPYYVALAATTAQLGWQVGTVDIDNGSDCWDKFKSNSWMGIILFSGIVASTLLKEVFQILIRPYH</sequence>
<comment type="function">
    <text evidence="1">Catalyzes the prenylation of para-hydroxybenzoate (PHB) with an all-trans polyprenyl group. Mediates the second step in the final reaction sequence of coenzyme Q (CoQ) biosynthesis, which is the condensation of the polyisoprenoid side chain with PHB, generating the first membrane-bound Q intermediate.</text>
</comment>
<comment type="catalytic activity">
    <reaction evidence="1">
        <text>an all-trans-polyprenyl diphosphate + 4-hydroxybenzoate = a 4-hydroxy-3-(all-trans-polyprenyl)benzoate + diphosphate</text>
        <dbReference type="Rhea" id="RHEA:44504"/>
        <dbReference type="Rhea" id="RHEA-COMP:9514"/>
        <dbReference type="Rhea" id="RHEA-COMP:9564"/>
        <dbReference type="ChEBI" id="CHEBI:17879"/>
        <dbReference type="ChEBI" id="CHEBI:33019"/>
        <dbReference type="ChEBI" id="CHEBI:58914"/>
        <dbReference type="ChEBI" id="CHEBI:78396"/>
        <dbReference type="EC" id="2.5.1.39"/>
    </reaction>
</comment>
<comment type="cofactor">
    <cofactor evidence="1">
        <name>Mg(2+)</name>
        <dbReference type="ChEBI" id="CHEBI:18420"/>
    </cofactor>
</comment>
<comment type="pathway">
    <text evidence="1">Cofactor biosynthesis; ubiquinone biosynthesis.</text>
</comment>
<comment type="subcellular location">
    <subcellularLocation>
        <location evidence="1">Mitochondrion inner membrane</location>
        <topology evidence="1">Multi-pass membrane protein</topology>
        <orientation evidence="1">Matrix side</orientation>
    </subcellularLocation>
</comment>
<comment type="alternative products">
    <event type="alternative splicing"/>
    <isoform>
        <id>Q8I7J4-1</id>
        <name>a</name>
        <sequence type="displayed"/>
    </isoform>
    <isoform>
        <id>Q8I7J4-2</id>
        <name>e</name>
        <sequence type="described" ref="VSP_017679 VSP_017680"/>
    </isoform>
</comment>
<comment type="similarity">
    <text evidence="1">Belongs to the UbiA prenyltransferase family.</text>
</comment>
<keyword id="KW-0025">Alternative splicing</keyword>
<keyword id="KW-0414">Isoprene biosynthesis</keyword>
<keyword id="KW-0472">Membrane</keyword>
<keyword id="KW-0496">Mitochondrion</keyword>
<keyword id="KW-0999">Mitochondrion inner membrane</keyword>
<keyword id="KW-1185">Reference proteome</keyword>
<keyword id="KW-0808">Transferase</keyword>
<keyword id="KW-0809">Transit peptide</keyword>
<keyword id="KW-0812">Transmembrane</keyword>
<keyword id="KW-1133">Transmembrane helix</keyword>
<keyword id="KW-0831">Ubiquinone biosynthesis</keyword>
<dbReference type="EC" id="2.5.1.39" evidence="1"/>
<dbReference type="EMBL" id="FO081266">
    <property type="protein sequence ID" value="CCD70307.1"/>
    <property type="molecule type" value="Genomic_DNA"/>
</dbReference>
<dbReference type="EMBL" id="FO081266">
    <property type="protein sequence ID" value="CCD70311.1"/>
    <property type="molecule type" value="Genomic_DNA"/>
</dbReference>
<dbReference type="RefSeq" id="NP_498513.2">
    <property type="nucleotide sequence ID" value="NM_066112.5"/>
</dbReference>
<dbReference type="RefSeq" id="NP_871684.1">
    <molecule id="Q8I7J4-2"/>
    <property type="nucleotide sequence ID" value="NM_181955.5"/>
</dbReference>
<dbReference type="SMR" id="Q8I7J4"/>
<dbReference type="FunCoup" id="Q8I7J4">
    <property type="interactions" value="1176"/>
</dbReference>
<dbReference type="STRING" id="6239.F57B9.4a.1"/>
<dbReference type="PeptideAtlas" id="Q8I7J4"/>
<dbReference type="EnsemblMetazoa" id="F57B9.4a.1">
    <property type="protein sequence ID" value="F57B9.4a.1"/>
    <property type="gene ID" value="WBGene00000762"/>
</dbReference>
<dbReference type="EnsemblMetazoa" id="F57B9.4e.1">
    <molecule id="Q8I7J4-2"/>
    <property type="protein sequence ID" value="F57B9.4e.1"/>
    <property type="gene ID" value="WBGene00000762"/>
</dbReference>
<dbReference type="GeneID" id="175969"/>
<dbReference type="KEGG" id="cel:CELE_F57B9.4"/>
<dbReference type="UCSC" id="F57B9.4e">
    <molecule id="Q8I7J4-1"/>
    <property type="organism name" value="c. elegans"/>
</dbReference>
<dbReference type="AGR" id="WB:WBGene00000762"/>
<dbReference type="CTD" id="175969"/>
<dbReference type="WormBase" id="F57B9.4a">
    <property type="protein sequence ID" value="CE50155"/>
    <property type="gene ID" value="WBGene00000762"/>
    <property type="gene designation" value="coq-2"/>
</dbReference>
<dbReference type="WormBase" id="F57B9.4e">
    <molecule id="Q8I7J4-2"/>
    <property type="protein sequence ID" value="CE32446"/>
    <property type="gene ID" value="WBGene00000762"/>
    <property type="gene designation" value="coq-2"/>
</dbReference>
<dbReference type="eggNOG" id="KOG1381">
    <property type="taxonomic scope" value="Eukaryota"/>
</dbReference>
<dbReference type="GeneTree" id="ENSGT00940000153771"/>
<dbReference type="HOGENOM" id="CLU_034879_3_3_1"/>
<dbReference type="InParanoid" id="Q8I7J4"/>
<dbReference type="OrthoDB" id="18170at2759"/>
<dbReference type="Reactome" id="R-CEL-1268020">
    <property type="pathway name" value="Mitochondrial protein import"/>
</dbReference>
<dbReference type="Reactome" id="R-CEL-2142789">
    <property type="pathway name" value="Ubiquinol biosynthesis"/>
</dbReference>
<dbReference type="UniPathway" id="UPA00232"/>
<dbReference type="PRO" id="PR:Q8I7J4"/>
<dbReference type="Proteomes" id="UP000001940">
    <property type="component" value="Chromosome III"/>
</dbReference>
<dbReference type="Bgee" id="WBGene00000762">
    <property type="expression patterns" value="Expressed in germ line (C elegans) and 4 other cell types or tissues"/>
</dbReference>
<dbReference type="GO" id="GO:0005743">
    <property type="term" value="C:mitochondrial inner membrane"/>
    <property type="evidence" value="ECO:0000318"/>
    <property type="project" value="GO_Central"/>
</dbReference>
<dbReference type="GO" id="GO:0031966">
    <property type="term" value="C:mitochondrial membrane"/>
    <property type="evidence" value="ECO:0000250"/>
    <property type="project" value="WormBase"/>
</dbReference>
<dbReference type="GO" id="GO:0008412">
    <property type="term" value="F:4-hydroxybenzoate polyprenyltransferase activity"/>
    <property type="evidence" value="ECO:0000318"/>
    <property type="project" value="GO_Central"/>
</dbReference>
<dbReference type="GO" id="GO:0008299">
    <property type="term" value="P:isoprenoid biosynthetic process"/>
    <property type="evidence" value="ECO:0007669"/>
    <property type="project" value="UniProtKB-UniRule"/>
</dbReference>
<dbReference type="GO" id="GO:0006744">
    <property type="term" value="P:ubiquinone biosynthetic process"/>
    <property type="evidence" value="ECO:0000315"/>
    <property type="project" value="WormBase"/>
</dbReference>
<dbReference type="CDD" id="cd13959">
    <property type="entry name" value="PT_UbiA_COQ2"/>
    <property type="match status" value="1"/>
</dbReference>
<dbReference type="FunFam" id="1.20.120.1780:FF:000001">
    <property type="entry name" value="4-hydroxybenzoate octaprenyltransferase"/>
    <property type="match status" value="1"/>
</dbReference>
<dbReference type="FunFam" id="1.10.357.140:FF:000003">
    <property type="entry name" value="4-hydroxybenzoate polyprenyltransferase, mitochondrial"/>
    <property type="match status" value="1"/>
</dbReference>
<dbReference type="Gene3D" id="1.10.357.140">
    <property type="entry name" value="UbiA prenyltransferase"/>
    <property type="match status" value="1"/>
</dbReference>
<dbReference type="Gene3D" id="1.20.120.1780">
    <property type="entry name" value="UbiA prenyltransferase"/>
    <property type="match status" value="1"/>
</dbReference>
<dbReference type="HAMAP" id="MF_01635">
    <property type="entry name" value="UbiA"/>
    <property type="match status" value="1"/>
</dbReference>
<dbReference type="InterPro" id="IPR006370">
    <property type="entry name" value="HB_polyprenyltransferase-like"/>
</dbReference>
<dbReference type="InterPro" id="IPR039653">
    <property type="entry name" value="Prenyltransferase"/>
</dbReference>
<dbReference type="InterPro" id="IPR000537">
    <property type="entry name" value="UbiA_prenyltransferase"/>
</dbReference>
<dbReference type="InterPro" id="IPR030470">
    <property type="entry name" value="UbiA_prenylTrfase_CS"/>
</dbReference>
<dbReference type="InterPro" id="IPR044878">
    <property type="entry name" value="UbiA_sf"/>
</dbReference>
<dbReference type="NCBIfam" id="TIGR01474">
    <property type="entry name" value="ubiA_proteo"/>
    <property type="match status" value="1"/>
</dbReference>
<dbReference type="PANTHER" id="PTHR11048:SF28">
    <property type="entry name" value="4-HYDROXYBENZOATE POLYPRENYLTRANSFERASE, MITOCHONDRIAL"/>
    <property type="match status" value="1"/>
</dbReference>
<dbReference type="PANTHER" id="PTHR11048">
    <property type="entry name" value="PRENYLTRANSFERASES"/>
    <property type="match status" value="1"/>
</dbReference>
<dbReference type="Pfam" id="PF01040">
    <property type="entry name" value="UbiA"/>
    <property type="match status" value="1"/>
</dbReference>
<dbReference type="PROSITE" id="PS00943">
    <property type="entry name" value="UBIA"/>
    <property type="match status" value="1"/>
</dbReference>
<feature type="transit peptide" description="Mitochondrion" evidence="1">
    <location>
        <begin position="1"/>
        <end position="44"/>
    </location>
</feature>
<feature type="chain" id="PRO_0000228626" description="4-hydroxybenzoate polyprenyltransferase, mitochondrial" evidence="1">
    <location>
        <begin position="45"/>
        <end position="356"/>
    </location>
</feature>
<feature type="transmembrane region" description="Helical" evidence="1">
    <location>
        <begin position="71"/>
        <end position="91"/>
    </location>
</feature>
<feature type="transmembrane region" description="Helical" evidence="1">
    <location>
        <begin position="93"/>
        <end position="113"/>
    </location>
</feature>
<feature type="transmembrane region" description="Helical" evidence="1">
    <location>
        <begin position="150"/>
        <end position="170"/>
    </location>
</feature>
<feature type="transmembrane region" description="Helical" evidence="1">
    <location>
        <begin position="195"/>
        <end position="215"/>
    </location>
</feature>
<feature type="transmembrane region" description="Helical" evidence="1">
    <location>
        <begin position="269"/>
        <end position="289"/>
    </location>
</feature>
<feature type="transmembrane region" description="Helical" evidence="1">
    <location>
        <begin position="332"/>
        <end position="352"/>
    </location>
</feature>
<feature type="splice variant" id="VSP_017679" description="In isoform e." evidence="2">
    <original>LTFNWGALLGWCALKGDLSSSAPFWMYAAALQWTLIYDTIYA</original>
    <variation>ATLNWSVLIAWAELGHFNDFGIFLPLYTATILHTVIYDTIYS</variation>
    <location>
        <begin position="202"/>
        <end position="243"/>
    </location>
</feature>
<feature type="splice variant" id="VSP_017680" description="In isoform e." evidence="2">
    <original>EVFQILIRPYH</original>
    <variation>EDEKTKESRKNIGDENFDDVLVTTN</variation>
    <location>
        <begin position="346"/>
        <end position="356"/>
    </location>
</feature>
<protein>
    <recommendedName>
        <fullName evidence="1">4-hydroxybenzoate polyprenyltransferase, mitochondrial</fullName>
        <shortName evidence="1">4-HB polyprenyltransferase</shortName>
        <ecNumber evidence="1">2.5.1.39</ecNumber>
    </recommendedName>
    <alternativeName>
        <fullName evidence="1">Para-hydroxybenzoate--polyprenyltransferase</fullName>
        <shortName evidence="1">PHB:PPT</shortName>
        <shortName evidence="1">PHB:polyprenyltransferase</shortName>
    </alternativeName>
</protein>
<organism>
    <name type="scientific">Caenorhabditis elegans</name>
    <dbReference type="NCBI Taxonomy" id="6239"/>
    <lineage>
        <taxon>Eukaryota</taxon>
        <taxon>Metazoa</taxon>
        <taxon>Ecdysozoa</taxon>
        <taxon>Nematoda</taxon>
        <taxon>Chromadorea</taxon>
        <taxon>Rhabditida</taxon>
        <taxon>Rhabditina</taxon>
        <taxon>Rhabditomorpha</taxon>
        <taxon>Rhabditoidea</taxon>
        <taxon>Rhabditidae</taxon>
        <taxon>Peloderinae</taxon>
        <taxon>Caenorhabditis</taxon>
    </lineage>
</organism>
<proteinExistence type="inferred from homology"/>
<gene>
    <name type="primary">coq-2</name>
    <name type="ORF">F57B9.4</name>
</gene>
<accession>Q8I7J4</accession>
<accession>Q5DX46</accession>
<evidence type="ECO:0000255" key="1">
    <source>
        <dbReference type="HAMAP-Rule" id="MF_03189"/>
    </source>
</evidence>
<evidence type="ECO:0000305" key="2"/>